<feature type="chain" id="PRO_0000258361" description="Phosphoribosylformylglycinamidine cyclo-ligase">
    <location>
        <begin position="1"/>
        <end position="351"/>
    </location>
</feature>
<name>PUR5_IDILO</name>
<organism>
    <name type="scientific">Idiomarina loihiensis (strain ATCC BAA-735 / DSM 15497 / L2-TR)</name>
    <dbReference type="NCBI Taxonomy" id="283942"/>
    <lineage>
        <taxon>Bacteria</taxon>
        <taxon>Pseudomonadati</taxon>
        <taxon>Pseudomonadota</taxon>
        <taxon>Gammaproteobacteria</taxon>
        <taxon>Alteromonadales</taxon>
        <taxon>Idiomarinaceae</taxon>
        <taxon>Idiomarina</taxon>
    </lineage>
</organism>
<keyword id="KW-0067">ATP-binding</keyword>
<keyword id="KW-0963">Cytoplasm</keyword>
<keyword id="KW-0436">Ligase</keyword>
<keyword id="KW-0547">Nucleotide-binding</keyword>
<keyword id="KW-0658">Purine biosynthesis</keyword>
<keyword id="KW-1185">Reference proteome</keyword>
<dbReference type="EC" id="6.3.3.1" evidence="1"/>
<dbReference type="EMBL" id="AE017340">
    <property type="protein sequence ID" value="AAV82494.1"/>
    <property type="molecule type" value="Genomic_DNA"/>
</dbReference>
<dbReference type="RefSeq" id="WP_011234898.1">
    <property type="nucleotide sequence ID" value="NC_006512.1"/>
</dbReference>
<dbReference type="SMR" id="Q5QUP9"/>
<dbReference type="STRING" id="283942.IL1661"/>
<dbReference type="GeneID" id="41336835"/>
<dbReference type="KEGG" id="ilo:IL1661"/>
<dbReference type="eggNOG" id="COG0150">
    <property type="taxonomic scope" value="Bacteria"/>
</dbReference>
<dbReference type="HOGENOM" id="CLU_047116_0_0_6"/>
<dbReference type="OrthoDB" id="9777881at2"/>
<dbReference type="UniPathway" id="UPA00074">
    <property type="reaction ID" value="UER00129"/>
</dbReference>
<dbReference type="Proteomes" id="UP000001171">
    <property type="component" value="Chromosome"/>
</dbReference>
<dbReference type="GO" id="GO:0005829">
    <property type="term" value="C:cytosol"/>
    <property type="evidence" value="ECO:0007669"/>
    <property type="project" value="TreeGrafter"/>
</dbReference>
<dbReference type="GO" id="GO:0005524">
    <property type="term" value="F:ATP binding"/>
    <property type="evidence" value="ECO:0007669"/>
    <property type="project" value="UniProtKB-KW"/>
</dbReference>
<dbReference type="GO" id="GO:0004637">
    <property type="term" value="F:phosphoribosylamine-glycine ligase activity"/>
    <property type="evidence" value="ECO:0007669"/>
    <property type="project" value="TreeGrafter"/>
</dbReference>
<dbReference type="GO" id="GO:0004641">
    <property type="term" value="F:phosphoribosylformylglycinamidine cyclo-ligase activity"/>
    <property type="evidence" value="ECO:0007669"/>
    <property type="project" value="UniProtKB-UniRule"/>
</dbReference>
<dbReference type="GO" id="GO:0006189">
    <property type="term" value="P:'de novo' IMP biosynthetic process"/>
    <property type="evidence" value="ECO:0007669"/>
    <property type="project" value="UniProtKB-UniRule"/>
</dbReference>
<dbReference type="GO" id="GO:0046084">
    <property type="term" value="P:adenine biosynthetic process"/>
    <property type="evidence" value="ECO:0007669"/>
    <property type="project" value="TreeGrafter"/>
</dbReference>
<dbReference type="CDD" id="cd02196">
    <property type="entry name" value="PurM"/>
    <property type="match status" value="1"/>
</dbReference>
<dbReference type="FunFam" id="3.30.1330.10:FF:000001">
    <property type="entry name" value="Phosphoribosylformylglycinamidine cyclo-ligase"/>
    <property type="match status" value="1"/>
</dbReference>
<dbReference type="FunFam" id="3.90.650.10:FF:000001">
    <property type="entry name" value="Phosphoribosylformylglycinamidine cyclo-ligase"/>
    <property type="match status" value="1"/>
</dbReference>
<dbReference type="Gene3D" id="3.90.650.10">
    <property type="entry name" value="PurM-like C-terminal domain"/>
    <property type="match status" value="1"/>
</dbReference>
<dbReference type="Gene3D" id="3.30.1330.10">
    <property type="entry name" value="PurM-like, N-terminal domain"/>
    <property type="match status" value="1"/>
</dbReference>
<dbReference type="HAMAP" id="MF_00741">
    <property type="entry name" value="AIRS"/>
    <property type="match status" value="1"/>
</dbReference>
<dbReference type="InterPro" id="IPR010918">
    <property type="entry name" value="PurM-like_C_dom"/>
</dbReference>
<dbReference type="InterPro" id="IPR036676">
    <property type="entry name" value="PurM-like_C_sf"/>
</dbReference>
<dbReference type="InterPro" id="IPR016188">
    <property type="entry name" value="PurM-like_N"/>
</dbReference>
<dbReference type="InterPro" id="IPR036921">
    <property type="entry name" value="PurM-like_N_sf"/>
</dbReference>
<dbReference type="InterPro" id="IPR004733">
    <property type="entry name" value="PurM_cligase"/>
</dbReference>
<dbReference type="NCBIfam" id="TIGR00878">
    <property type="entry name" value="purM"/>
    <property type="match status" value="1"/>
</dbReference>
<dbReference type="PANTHER" id="PTHR10520:SF12">
    <property type="entry name" value="TRIFUNCTIONAL PURINE BIOSYNTHETIC PROTEIN ADENOSINE-3"/>
    <property type="match status" value="1"/>
</dbReference>
<dbReference type="PANTHER" id="PTHR10520">
    <property type="entry name" value="TRIFUNCTIONAL PURINE BIOSYNTHETIC PROTEIN ADENOSINE-3-RELATED"/>
    <property type="match status" value="1"/>
</dbReference>
<dbReference type="Pfam" id="PF00586">
    <property type="entry name" value="AIRS"/>
    <property type="match status" value="1"/>
</dbReference>
<dbReference type="Pfam" id="PF02769">
    <property type="entry name" value="AIRS_C"/>
    <property type="match status" value="1"/>
</dbReference>
<dbReference type="SUPFAM" id="SSF56042">
    <property type="entry name" value="PurM C-terminal domain-like"/>
    <property type="match status" value="1"/>
</dbReference>
<dbReference type="SUPFAM" id="SSF55326">
    <property type="entry name" value="PurM N-terminal domain-like"/>
    <property type="match status" value="1"/>
</dbReference>
<comment type="catalytic activity">
    <reaction evidence="1">
        <text>2-formamido-N(1)-(5-O-phospho-beta-D-ribosyl)acetamidine + ATP = 5-amino-1-(5-phospho-beta-D-ribosyl)imidazole + ADP + phosphate + H(+)</text>
        <dbReference type="Rhea" id="RHEA:23032"/>
        <dbReference type="ChEBI" id="CHEBI:15378"/>
        <dbReference type="ChEBI" id="CHEBI:30616"/>
        <dbReference type="ChEBI" id="CHEBI:43474"/>
        <dbReference type="ChEBI" id="CHEBI:137981"/>
        <dbReference type="ChEBI" id="CHEBI:147287"/>
        <dbReference type="ChEBI" id="CHEBI:456216"/>
        <dbReference type="EC" id="6.3.3.1"/>
    </reaction>
</comment>
<comment type="pathway">
    <text evidence="1">Purine metabolism; IMP biosynthesis via de novo pathway; 5-amino-1-(5-phospho-D-ribosyl)imidazole from N(2)-formyl-N(1)-(5-phospho-D-ribosyl)glycinamide: step 2/2.</text>
</comment>
<comment type="subcellular location">
    <subcellularLocation>
        <location evidence="1">Cytoplasm</location>
    </subcellularLocation>
</comment>
<comment type="similarity">
    <text evidence="1">Belongs to the AIR synthase family.</text>
</comment>
<reference key="1">
    <citation type="journal article" date="2004" name="Proc. Natl. Acad. Sci. U.S.A.">
        <title>Genome sequence of the deep-sea gamma-proteobacterium Idiomarina loihiensis reveals amino acid fermentation as a source of carbon and energy.</title>
        <authorList>
            <person name="Hou S."/>
            <person name="Saw J.H."/>
            <person name="Lee K.S."/>
            <person name="Freitas T.A."/>
            <person name="Belisle C."/>
            <person name="Kawarabayasi Y."/>
            <person name="Donachie S.P."/>
            <person name="Pikina A."/>
            <person name="Galperin M.Y."/>
            <person name="Koonin E.V."/>
            <person name="Makarova K.S."/>
            <person name="Omelchenko M.V."/>
            <person name="Sorokin A."/>
            <person name="Wolf Y.I."/>
            <person name="Li Q.X."/>
            <person name="Keum Y.S."/>
            <person name="Campbell S."/>
            <person name="Denery J."/>
            <person name="Aizawa S."/>
            <person name="Shibata S."/>
            <person name="Malahoff A."/>
            <person name="Alam M."/>
        </authorList>
    </citation>
    <scope>NUCLEOTIDE SEQUENCE [LARGE SCALE GENOMIC DNA]</scope>
    <source>
        <strain>ATCC BAA-735 / DSM 15497 / L2-TR</strain>
    </source>
</reference>
<proteinExistence type="inferred from homology"/>
<sequence length="351" mass="37425">MSDKKPSLSYKDAGVDIDAGNALVERIKGVTKRTHRPEVMGNIGGFGALCEIPAGYKQPVLVSGTDGVGTKLRLAIDLKRHRGVGIDLVAMCVNDLIVQGAEPLFFLDYYATGKLDVDVAADVVAGIGDGCEQSGCALIGGETAEMPGMYEGGDYDLAGFCTGVVEKSEIIDGTKVADGDALIALASSGPHSNGYSLIRKIIEVSGADLESHLQGKTLADHLLEPTRIYVKPVLELIKHVPVHALSHITGGGFWENIPRVLPKGSKAVIDGNSWDWPVIFDWLKENGNISMKEMYRTFNCGVGMVIAVPNEQADKAIQILTDAGEDAWKIGRIANAAEGEEQVDILADETH</sequence>
<protein>
    <recommendedName>
        <fullName evidence="1">Phosphoribosylformylglycinamidine cyclo-ligase</fullName>
        <ecNumber evidence="1">6.3.3.1</ecNumber>
    </recommendedName>
    <alternativeName>
        <fullName evidence="1">AIR synthase</fullName>
    </alternativeName>
    <alternativeName>
        <fullName evidence="1">AIRS</fullName>
    </alternativeName>
    <alternativeName>
        <fullName evidence="1">Phosphoribosyl-aminoimidazole synthetase</fullName>
    </alternativeName>
</protein>
<evidence type="ECO:0000255" key="1">
    <source>
        <dbReference type="HAMAP-Rule" id="MF_00741"/>
    </source>
</evidence>
<accession>Q5QUP9</accession>
<gene>
    <name evidence="1" type="primary">purM</name>
    <name type="ordered locus">IL1661</name>
</gene>